<proteinExistence type="inferred from homology"/>
<protein>
    <recommendedName>
        <fullName evidence="1">Ribosomal RNA small subunit methyltransferase C</fullName>
        <ecNumber evidence="1">2.1.1.172</ecNumber>
    </recommendedName>
    <alternativeName>
        <fullName evidence="1">16S rRNA m2G1207 methyltransferase</fullName>
    </alternativeName>
    <alternativeName>
        <fullName evidence="1">rRNA (guanine-N(2)-)-methyltransferase RsmC</fullName>
    </alternativeName>
</protein>
<comment type="function">
    <text evidence="1">Specifically methylates the guanine in position 1207 of 16S rRNA in the 30S particle.</text>
</comment>
<comment type="catalytic activity">
    <reaction evidence="1">
        <text>guanosine(1207) in 16S rRNA + S-adenosyl-L-methionine = N(2)-methylguanosine(1207) in 16S rRNA + S-adenosyl-L-homocysteine + H(+)</text>
        <dbReference type="Rhea" id="RHEA:42736"/>
        <dbReference type="Rhea" id="RHEA-COMP:10213"/>
        <dbReference type="Rhea" id="RHEA-COMP:10214"/>
        <dbReference type="ChEBI" id="CHEBI:15378"/>
        <dbReference type="ChEBI" id="CHEBI:57856"/>
        <dbReference type="ChEBI" id="CHEBI:59789"/>
        <dbReference type="ChEBI" id="CHEBI:74269"/>
        <dbReference type="ChEBI" id="CHEBI:74481"/>
        <dbReference type="EC" id="2.1.1.172"/>
    </reaction>
</comment>
<comment type="subunit">
    <text evidence="1">Monomer.</text>
</comment>
<comment type="subcellular location">
    <subcellularLocation>
        <location evidence="1">Cytoplasm</location>
    </subcellularLocation>
</comment>
<comment type="similarity">
    <text evidence="1">Belongs to the methyltransferase superfamily. RsmC family.</text>
</comment>
<sequence length="343" mass="37625">MSAFTPASEVLLRHSDDFEQSRILFAGDLQDDLPARLDTAASRAHTQQFHHWQVLSRQMGDNARFSLVATADDVADCDTLIYYWPKNKPEAQFQLMNLLSLLPVGTDIFVVGENRSGVRSAEQMLADYAPLNKVDSARRCGLYFGRLEKQPVFDAEKFWGEYSVDGLTVKTLPGVFSRDGLDVGSQLLLSTLTPHTKGKVLDVGCGAGVLSVAFARHSPKIRLTLCDVSAPAVEASRATLAANGVEGEVFASNVFSEVKGRFDMIISNPPFHDGMQTSLDAAQTLIRGAVRHLNSGGELRIVANAFLPYPDVLDETFGFHEVIAQTGRFKVYRAIMTRQAKKG</sequence>
<gene>
    <name evidence="1" type="primary">rsmC</name>
    <name type="ordered locus">SDY_4630</name>
</gene>
<accession>Q327M6</accession>
<organism>
    <name type="scientific">Shigella dysenteriae serotype 1 (strain Sd197)</name>
    <dbReference type="NCBI Taxonomy" id="300267"/>
    <lineage>
        <taxon>Bacteria</taxon>
        <taxon>Pseudomonadati</taxon>
        <taxon>Pseudomonadota</taxon>
        <taxon>Gammaproteobacteria</taxon>
        <taxon>Enterobacterales</taxon>
        <taxon>Enterobacteriaceae</taxon>
        <taxon>Shigella</taxon>
    </lineage>
</organism>
<evidence type="ECO:0000255" key="1">
    <source>
        <dbReference type="HAMAP-Rule" id="MF_01862"/>
    </source>
</evidence>
<reference key="1">
    <citation type="journal article" date="2005" name="Nucleic Acids Res.">
        <title>Genome dynamics and diversity of Shigella species, the etiologic agents of bacillary dysentery.</title>
        <authorList>
            <person name="Yang F."/>
            <person name="Yang J."/>
            <person name="Zhang X."/>
            <person name="Chen L."/>
            <person name="Jiang Y."/>
            <person name="Yan Y."/>
            <person name="Tang X."/>
            <person name="Wang J."/>
            <person name="Xiong Z."/>
            <person name="Dong J."/>
            <person name="Xue Y."/>
            <person name="Zhu Y."/>
            <person name="Xu X."/>
            <person name="Sun L."/>
            <person name="Chen S."/>
            <person name="Nie H."/>
            <person name="Peng J."/>
            <person name="Xu J."/>
            <person name="Wang Y."/>
            <person name="Yuan Z."/>
            <person name="Wen Y."/>
            <person name="Yao Z."/>
            <person name="Shen Y."/>
            <person name="Qiang B."/>
            <person name="Hou Y."/>
            <person name="Yu J."/>
            <person name="Jin Q."/>
        </authorList>
    </citation>
    <scope>NUCLEOTIDE SEQUENCE [LARGE SCALE GENOMIC DNA]</scope>
    <source>
        <strain>Sd197</strain>
    </source>
</reference>
<feature type="chain" id="PRO_0000369786" description="Ribosomal RNA small subunit methyltransferase C">
    <location>
        <begin position="1"/>
        <end position="343"/>
    </location>
</feature>
<dbReference type="EC" id="2.1.1.172" evidence="1"/>
<dbReference type="EMBL" id="CP000034">
    <property type="protein sequence ID" value="ABB64479.1"/>
    <property type="molecule type" value="Genomic_DNA"/>
</dbReference>
<dbReference type="RefSeq" id="WP_001272330.1">
    <property type="nucleotide sequence ID" value="NC_007606.1"/>
</dbReference>
<dbReference type="RefSeq" id="YP_405970.1">
    <property type="nucleotide sequence ID" value="NC_007606.1"/>
</dbReference>
<dbReference type="SMR" id="Q327M6"/>
<dbReference type="STRING" id="300267.SDY_4630"/>
<dbReference type="EnsemblBacteria" id="ABB64479">
    <property type="protein sequence ID" value="ABB64479"/>
    <property type="gene ID" value="SDY_4630"/>
</dbReference>
<dbReference type="KEGG" id="sdy:SDY_4630"/>
<dbReference type="PATRIC" id="fig|300267.13.peg.5488"/>
<dbReference type="HOGENOM" id="CLU_049581_0_1_6"/>
<dbReference type="Proteomes" id="UP000002716">
    <property type="component" value="Chromosome"/>
</dbReference>
<dbReference type="GO" id="GO:0005737">
    <property type="term" value="C:cytoplasm"/>
    <property type="evidence" value="ECO:0007669"/>
    <property type="project" value="UniProtKB-SubCell"/>
</dbReference>
<dbReference type="GO" id="GO:0052914">
    <property type="term" value="F:16S rRNA (guanine(1207)-N(2))-methyltransferase activity"/>
    <property type="evidence" value="ECO:0007669"/>
    <property type="project" value="UniProtKB-EC"/>
</dbReference>
<dbReference type="GO" id="GO:0003676">
    <property type="term" value="F:nucleic acid binding"/>
    <property type="evidence" value="ECO:0007669"/>
    <property type="project" value="InterPro"/>
</dbReference>
<dbReference type="CDD" id="cd02440">
    <property type="entry name" value="AdoMet_MTases"/>
    <property type="match status" value="1"/>
</dbReference>
<dbReference type="FunFam" id="3.40.50.150:FF:000058">
    <property type="entry name" value="Ribosomal RNA small subunit methyltransferase C"/>
    <property type="match status" value="1"/>
</dbReference>
<dbReference type="FunFam" id="3.40.50.150:FF:000063">
    <property type="entry name" value="Ribosomal RNA small subunit methyltransferase C"/>
    <property type="match status" value="1"/>
</dbReference>
<dbReference type="Gene3D" id="3.40.50.150">
    <property type="entry name" value="Vaccinia Virus protein VP39"/>
    <property type="match status" value="2"/>
</dbReference>
<dbReference type="HAMAP" id="MF_01862">
    <property type="entry name" value="16SrRNA_methyltr_C"/>
    <property type="match status" value="1"/>
</dbReference>
<dbReference type="InterPro" id="IPR002052">
    <property type="entry name" value="DNA_methylase_N6_adenine_CS"/>
</dbReference>
<dbReference type="InterPro" id="IPR013675">
    <property type="entry name" value="Mtase_sm_N"/>
</dbReference>
<dbReference type="InterPro" id="IPR023543">
    <property type="entry name" value="rRNA_ssu_MeTfrase_C"/>
</dbReference>
<dbReference type="InterPro" id="IPR046977">
    <property type="entry name" value="RsmC/RlmG"/>
</dbReference>
<dbReference type="InterPro" id="IPR029063">
    <property type="entry name" value="SAM-dependent_MTases_sf"/>
</dbReference>
<dbReference type="InterPro" id="IPR007848">
    <property type="entry name" value="Small_mtfrase_dom"/>
</dbReference>
<dbReference type="NCBIfam" id="NF007023">
    <property type="entry name" value="PRK09489.1"/>
    <property type="match status" value="1"/>
</dbReference>
<dbReference type="PANTHER" id="PTHR47816">
    <property type="entry name" value="RIBOSOMAL RNA SMALL SUBUNIT METHYLTRANSFERASE C"/>
    <property type="match status" value="1"/>
</dbReference>
<dbReference type="PANTHER" id="PTHR47816:SF4">
    <property type="entry name" value="RIBOSOMAL RNA SMALL SUBUNIT METHYLTRANSFERASE C"/>
    <property type="match status" value="1"/>
</dbReference>
<dbReference type="Pfam" id="PF05175">
    <property type="entry name" value="MTS"/>
    <property type="match status" value="1"/>
</dbReference>
<dbReference type="Pfam" id="PF08468">
    <property type="entry name" value="MTS_N"/>
    <property type="match status" value="1"/>
</dbReference>
<dbReference type="SUPFAM" id="SSF53335">
    <property type="entry name" value="S-adenosyl-L-methionine-dependent methyltransferases"/>
    <property type="match status" value="1"/>
</dbReference>
<name>RSMC_SHIDS</name>
<keyword id="KW-0963">Cytoplasm</keyword>
<keyword id="KW-0489">Methyltransferase</keyword>
<keyword id="KW-1185">Reference proteome</keyword>
<keyword id="KW-0698">rRNA processing</keyword>
<keyword id="KW-0949">S-adenosyl-L-methionine</keyword>
<keyword id="KW-0808">Transferase</keyword>